<sequence length="119" mass="13220">MILGIGIDIIELNRIEKMINGKLNFIERILTETERDVAAKLKGKRLVEFVAGRFAAKEAYSKAVGTGIGKEVSFLDIEIKNDQKGKPVLFTNTEYIVHLSISHSREFAVAQVVLESPSC</sequence>
<feature type="chain" id="PRO_1000075629" description="Holo-[acyl-carrier-protein] synthase">
    <location>
        <begin position="1"/>
        <end position="119"/>
    </location>
</feature>
<feature type="binding site" evidence="1">
    <location>
        <position position="8"/>
    </location>
    <ligand>
        <name>Mg(2+)</name>
        <dbReference type="ChEBI" id="CHEBI:18420"/>
    </ligand>
</feature>
<feature type="binding site" evidence="1">
    <location>
        <position position="58"/>
    </location>
    <ligand>
        <name>Mg(2+)</name>
        <dbReference type="ChEBI" id="CHEBI:18420"/>
    </ligand>
</feature>
<reference key="1">
    <citation type="journal article" date="2008" name="Chem. Biol. Interact.">
        <title>Extending the Bacillus cereus group genomics to putative food-borne pathogens of different toxicity.</title>
        <authorList>
            <person name="Lapidus A."/>
            <person name="Goltsman E."/>
            <person name="Auger S."/>
            <person name="Galleron N."/>
            <person name="Segurens B."/>
            <person name="Dossat C."/>
            <person name="Land M.L."/>
            <person name="Broussolle V."/>
            <person name="Brillard J."/>
            <person name="Guinebretiere M.-H."/>
            <person name="Sanchis V."/>
            <person name="Nguen-the C."/>
            <person name="Lereclus D."/>
            <person name="Richardson P."/>
            <person name="Wincker P."/>
            <person name="Weissenbach J."/>
            <person name="Ehrlich S.D."/>
            <person name="Sorokin A."/>
        </authorList>
    </citation>
    <scope>NUCLEOTIDE SEQUENCE [LARGE SCALE GENOMIC DNA]</scope>
    <source>
        <strain>DSM 22905 / CIP 110041 / 391-98 / NVH 391-98</strain>
    </source>
</reference>
<dbReference type="EC" id="2.7.8.7" evidence="1"/>
<dbReference type="EMBL" id="CP000764">
    <property type="protein sequence ID" value="ABS20602.1"/>
    <property type="molecule type" value="Genomic_DNA"/>
</dbReference>
<dbReference type="RefSeq" id="WP_011983363.1">
    <property type="nucleotide sequence ID" value="NC_009674.1"/>
</dbReference>
<dbReference type="SMR" id="A7GKE4"/>
<dbReference type="STRING" id="315749.Bcer98_0236"/>
<dbReference type="GeneID" id="33895563"/>
<dbReference type="KEGG" id="bcy:Bcer98_0236"/>
<dbReference type="eggNOG" id="COG0736">
    <property type="taxonomic scope" value="Bacteria"/>
</dbReference>
<dbReference type="HOGENOM" id="CLU_089696_1_2_9"/>
<dbReference type="OrthoDB" id="517356at2"/>
<dbReference type="Proteomes" id="UP000002300">
    <property type="component" value="Chromosome"/>
</dbReference>
<dbReference type="GO" id="GO:0005829">
    <property type="term" value="C:cytosol"/>
    <property type="evidence" value="ECO:0007669"/>
    <property type="project" value="TreeGrafter"/>
</dbReference>
<dbReference type="GO" id="GO:0008897">
    <property type="term" value="F:holo-[acyl-carrier-protein] synthase activity"/>
    <property type="evidence" value="ECO:0007669"/>
    <property type="project" value="UniProtKB-UniRule"/>
</dbReference>
<dbReference type="GO" id="GO:0000287">
    <property type="term" value="F:magnesium ion binding"/>
    <property type="evidence" value="ECO:0007669"/>
    <property type="project" value="UniProtKB-UniRule"/>
</dbReference>
<dbReference type="GO" id="GO:0006633">
    <property type="term" value="P:fatty acid biosynthetic process"/>
    <property type="evidence" value="ECO:0007669"/>
    <property type="project" value="UniProtKB-UniRule"/>
</dbReference>
<dbReference type="GO" id="GO:0019878">
    <property type="term" value="P:lysine biosynthetic process via aminoadipic acid"/>
    <property type="evidence" value="ECO:0007669"/>
    <property type="project" value="TreeGrafter"/>
</dbReference>
<dbReference type="Gene3D" id="3.90.470.20">
    <property type="entry name" value="4'-phosphopantetheinyl transferase domain"/>
    <property type="match status" value="1"/>
</dbReference>
<dbReference type="HAMAP" id="MF_00101">
    <property type="entry name" value="AcpS"/>
    <property type="match status" value="1"/>
</dbReference>
<dbReference type="InterPro" id="IPR008278">
    <property type="entry name" value="4-PPantetheinyl_Trfase_dom"/>
</dbReference>
<dbReference type="InterPro" id="IPR037143">
    <property type="entry name" value="4-PPantetheinyl_Trfase_dom_sf"/>
</dbReference>
<dbReference type="InterPro" id="IPR002582">
    <property type="entry name" value="ACPS"/>
</dbReference>
<dbReference type="InterPro" id="IPR050559">
    <property type="entry name" value="P-Pant_transferase_sf"/>
</dbReference>
<dbReference type="InterPro" id="IPR004568">
    <property type="entry name" value="Ppantetheine-prot_Trfase_dom"/>
</dbReference>
<dbReference type="NCBIfam" id="TIGR00516">
    <property type="entry name" value="acpS"/>
    <property type="match status" value="1"/>
</dbReference>
<dbReference type="NCBIfam" id="TIGR00556">
    <property type="entry name" value="pantethn_trn"/>
    <property type="match status" value="1"/>
</dbReference>
<dbReference type="PANTHER" id="PTHR12215:SF10">
    <property type="entry name" value="L-AMINOADIPATE-SEMIALDEHYDE DEHYDROGENASE-PHOSPHOPANTETHEINYL TRANSFERASE"/>
    <property type="match status" value="1"/>
</dbReference>
<dbReference type="PANTHER" id="PTHR12215">
    <property type="entry name" value="PHOSPHOPANTETHEINE TRANSFERASE"/>
    <property type="match status" value="1"/>
</dbReference>
<dbReference type="Pfam" id="PF01648">
    <property type="entry name" value="ACPS"/>
    <property type="match status" value="1"/>
</dbReference>
<dbReference type="SUPFAM" id="SSF56214">
    <property type="entry name" value="4'-phosphopantetheinyl transferase"/>
    <property type="match status" value="1"/>
</dbReference>
<name>ACPS_BACCN</name>
<gene>
    <name evidence="1" type="primary">acpS</name>
    <name type="ordered locus">Bcer98_0236</name>
</gene>
<organism>
    <name type="scientific">Bacillus cytotoxicus (strain DSM 22905 / CIP 110041 / 391-98 / NVH 391-98)</name>
    <dbReference type="NCBI Taxonomy" id="315749"/>
    <lineage>
        <taxon>Bacteria</taxon>
        <taxon>Bacillati</taxon>
        <taxon>Bacillota</taxon>
        <taxon>Bacilli</taxon>
        <taxon>Bacillales</taxon>
        <taxon>Bacillaceae</taxon>
        <taxon>Bacillus</taxon>
        <taxon>Bacillus cereus group</taxon>
    </lineage>
</organism>
<keyword id="KW-0963">Cytoplasm</keyword>
<keyword id="KW-0275">Fatty acid biosynthesis</keyword>
<keyword id="KW-0276">Fatty acid metabolism</keyword>
<keyword id="KW-0444">Lipid biosynthesis</keyword>
<keyword id="KW-0443">Lipid metabolism</keyword>
<keyword id="KW-0460">Magnesium</keyword>
<keyword id="KW-0479">Metal-binding</keyword>
<keyword id="KW-0808">Transferase</keyword>
<comment type="function">
    <text evidence="1">Transfers the 4'-phosphopantetheine moiety from coenzyme A to a Ser of acyl-carrier-protein.</text>
</comment>
<comment type="catalytic activity">
    <reaction evidence="1">
        <text>apo-[ACP] + CoA = holo-[ACP] + adenosine 3',5'-bisphosphate + H(+)</text>
        <dbReference type="Rhea" id="RHEA:12068"/>
        <dbReference type="Rhea" id="RHEA-COMP:9685"/>
        <dbReference type="Rhea" id="RHEA-COMP:9690"/>
        <dbReference type="ChEBI" id="CHEBI:15378"/>
        <dbReference type="ChEBI" id="CHEBI:29999"/>
        <dbReference type="ChEBI" id="CHEBI:57287"/>
        <dbReference type="ChEBI" id="CHEBI:58343"/>
        <dbReference type="ChEBI" id="CHEBI:64479"/>
        <dbReference type="EC" id="2.7.8.7"/>
    </reaction>
</comment>
<comment type="cofactor">
    <cofactor evidence="1">
        <name>Mg(2+)</name>
        <dbReference type="ChEBI" id="CHEBI:18420"/>
    </cofactor>
</comment>
<comment type="subcellular location">
    <subcellularLocation>
        <location evidence="1">Cytoplasm</location>
    </subcellularLocation>
</comment>
<comment type="similarity">
    <text evidence="1">Belongs to the P-Pant transferase superfamily. AcpS family.</text>
</comment>
<evidence type="ECO:0000255" key="1">
    <source>
        <dbReference type="HAMAP-Rule" id="MF_00101"/>
    </source>
</evidence>
<accession>A7GKE4</accession>
<protein>
    <recommendedName>
        <fullName evidence="1">Holo-[acyl-carrier-protein] synthase</fullName>
        <shortName evidence="1">Holo-ACP synthase</shortName>
        <ecNumber evidence="1">2.7.8.7</ecNumber>
    </recommendedName>
    <alternativeName>
        <fullName evidence="1">4'-phosphopantetheinyl transferase AcpS</fullName>
    </alternativeName>
</protein>
<proteinExistence type="inferred from homology"/>